<evidence type="ECO:0000255" key="1">
    <source>
        <dbReference type="HAMAP-Rule" id="MF_01331"/>
    </source>
</evidence>
<evidence type="ECO:0000305" key="2"/>
<name>RL22_BACAN</name>
<feature type="chain" id="PRO_0000125114" description="Large ribosomal subunit protein uL22">
    <location>
        <begin position="1"/>
        <end position="113"/>
    </location>
</feature>
<dbReference type="EMBL" id="AE016879">
    <property type="protein sequence ID" value="AAP24169.1"/>
    <property type="molecule type" value="Genomic_DNA"/>
</dbReference>
<dbReference type="EMBL" id="AE017334">
    <property type="protein sequence ID" value="AAT29195.1"/>
    <property type="molecule type" value="Genomic_DNA"/>
</dbReference>
<dbReference type="EMBL" id="AE017225">
    <property type="protein sequence ID" value="AAT52452.1"/>
    <property type="molecule type" value="Genomic_DNA"/>
</dbReference>
<dbReference type="RefSeq" id="NP_842683.1">
    <property type="nucleotide sequence ID" value="NC_003997.3"/>
</dbReference>
<dbReference type="RefSeq" id="WP_001148025.1">
    <property type="nucleotide sequence ID" value="NZ_WXXJ01000051.1"/>
</dbReference>
<dbReference type="RefSeq" id="YP_026401.1">
    <property type="nucleotide sequence ID" value="NC_005945.1"/>
</dbReference>
<dbReference type="SMR" id="Q81VS5"/>
<dbReference type="STRING" id="261594.GBAA_0115"/>
<dbReference type="DNASU" id="1086393"/>
<dbReference type="GeneID" id="93010938"/>
<dbReference type="KEGG" id="ban:BA_0115"/>
<dbReference type="KEGG" id="bar:GBAA_0115"/>
<dbReference type="KEGG" id="bat:BAS0115"/>
<dbReference type="PATRIC" id="fig|198094.11.peg.112"/>
<dbReference type="eggNOG" id="COG0091">
    <property type="taxonomic scope" value="Bacteria"/>
</dbReference>
<dbReference type="HOGENOM" id="CLU_083987_3_3_9"/>
<dbReference type="OMA" id="KRIQPRA"/>
<dbReference type="OrthoDB" id="9805969at2"/>
<dbReference type="Proteomes" id="UP000000427">
    <property type="component" value="Chromosome"/>
</dbReference>
<dbReference type="Proteomes" id="UP000000594">
    <property type="component" value="Chromosome"/>
</dbReference>
<dbReference type="GO" id="GO:0022625">
    <property type="term" value="C:cytosolic large ribosomal subunit"/>
    <property type="evidence" value="ECO:0007669"/>
    <property type="project" value="TreeGrafter"/>
</dbReference>
<dbReference type="GO" id="GO:0019843">
    <property type="term" value="F:rRNA binding"/>
    <property type="evidence" value="ECO:0007669"/>
    <property type="project" value="UniProtKB-UniRule"/>
</dbReference>
<dbReference type="GO" id="GO:0003735">
    <property type="term" value="F:structural constituent of ribosome"/>
    <property type="evidence" value="ECO:0007669"/>
    <property type="project" value="InterPro"/>
</dbReference>
<dbReference type="GO" id="GO:0006412">
    <property type="term" value="P:translation"/>
    <property type="evidence" value="ECO:0007669"/>
    <property type="project" value="UniProtKB-UniRule"/>
</dbReference>
<dbReference type="CDD" id="cd00336">
    <property type="entry name" value="Ribosomal_L22"/>
    <property type="match status" value="1"/>
</dbReference>
<dbReference type="FunFam" id="3.90.470.10:FF:000001">
    <property type="entry name" value="50S ribosomal protein L22"/>
    <property type="match status" value="1"/>
</dbReference>
<dbReference type="Gene3D" id="3.90.470.10">
    <property type="entry name" value="Ribosomal protein L22/L17"/>
    <property type="match status" value="1"/>
</dbReference>
<dbReference type="HAMAP" id="MF_01331_B">
    <property type="entry name" value="Ribosomal_uL22_B"/>
    <property type="match status" value="1"/>
</dbReference>
<dbReference type="InterPro" id="IPR001063">
    <property type="entry name" value="Ribosomal_uL22"/>
</dbReference>
<dbReference type="InterPro" id="IPR005727">
    <property type="entry name" value="Ribosomal_uL22_bac/chlpt-type"/>
</dbReference>
<dbReference type="InterPro" id="IPR047867">
    <property type="entry name" value="Ribosomal_uL22_bac/org-type"/>
</dbReference>
<dbReference type="InterPro" id="IPR018260">
    <property type="entry name" value="Ribosomal_uL22_CS"/>
</dbReference>
<dbReference type="InterPro" id="IPR036394">
    <property type="entry name" value="Ribosomal_uL22_sf"/>
</dbReference>
<dbReference type="NCBIfam" id="TIGR01044">
    <property type="entry name" value="rplV_bact"/>
    <property type="match status" value="1"/>
</dbReference>
<dbReference type="PANTHER" id="PTHR13501">
    <property type="entry name" value="CHLOROPLAST 50S RIBOSOMAL PROTEIN L22-RELATED"/>
    <property type="match status" value="1"/>
</dbReference>
<dbReference type="PANTHER" id="PTHR13501:SF8">
    <property type="entry name" value="LARGE RIBOSOMAL SUBUNIT PROTEIN UL22M"/>
    <property type="match status" value="1"/>
</dbReference>
<dbReference type="Pfam" id="PF00237">
    <property type="entry name" value="Ribosomal_L22"/>
    <property type="match status" value="1"/>
</dbReference>
<dbReference type="SUPFAM" id="SSF54843">
    <property type="entry name" value="Ribosomal protein L22"/>
    <property type="match status" value="1"/>
</dbReference>
<dbReference type="PROSITE" id="PS00464">
    <property type="entry name" value="RIBOSOMAL_L22"/>
    <property type="match status" value="1"/>
</dbReference>
<organism>
    <name type="scientific">Bacillus anthracis</name>
    <dbReference type="NCBI Taxonomy" id="1392"/>
    <lineage>
        <taxon>Bacteria</taxon>
        <taxon>Bacillati</taxon>
        <taxon>Bacillota</taxon>
        <taxon>Bacilli</taxon>
        <taxon>Bacillales</taxon>
        <taxon>Bacillaceae</taxon>
        <taxon>Bacillus</taxon>
        <taxon>Bacillus cereus group</taxon>
    </lineage>
</organism>
<gene>
    <name evidence="1" type="primary">rplV</name>
    <name type="ordered locus">BA_0115</name>
    <name type="ordered locus">GBAA_0115</name>
    <name type="ordered locus">BAS0115</name>
</gene>
<comment type="function">
    <text evidence="1">This protein binds specifically to 23S rRNA; its binding is stimulated by other ribosomal proteins, e.g. L4, L17, and L20. It is important during the early stages of 50S assembly. It makes multiple contacts with different domains of the 23S rRNA in the assembled 50S subunit and ribosome (By similarity).</text>
</comment>
<comment type="function">
    <text evidence="1">The globular domain of the protein is located near the polypeptide exit tunnel on the outside of the subunit, while an extended beta-hairpin is found that lines the wall of the exit tunnel in the center of the 70S ribosome.</text>
</comment>
<comment type="subunit">
    <text evidence="1">Part of the 50S ribosomal subunit.</text>
</comment>
<comment type="similarity">
    <text evidence="1">Belongs to the universal ribosomal protein uL22 family.</text>
</comment>
<proteinExistence type="inferred from homology"/>
<protein>
    <recommendedName>
        <fullName evidence="1">Large ribosomal subunit protein uL22</fullName>
    </recommendedName>
    <alternativeName>
        <fullName evidence="2">50S ribosomal protein L22</fullName>
    </alternativeName>
</protein>
<reference key="1">
    <citation type="journal article" date="2003" name="Nature">
        <title>The genome sequence of Bacillus anthracis Ames and comparison to closely related bacteria.</title>
        <authorList>
            <person name="Read T.D."/>
            <person name="Peterson S.N."/>
            <person name="Tourasse N.J."/>
            <person name="Baillie L.W."/>
            <person name="Paulsen I.T."/>
            <person name="Nelson K.E."/>
            <person name="Tettelin H."/>
            <person name="Fouts D.E."/>
            <person name="Eisen J.A."/>
            <person name="Gill S.R."/>
            <person name="Holtzapple E.K."/>
            <person name="Okstad O.A."/>
            <person name="Helgason E."/>
            <person name="Rilstone J."/>
            <person name="Wu M."/>
            <person name="Kolonay J.F."/>
            <person name="Beanan M.J."/>
            <person name="Dodson R.J."/>
            <person name="Brinkac L.M."/>
            <person name="Gwinn M.L."/>
            <person name="DeBoy R.T."/>
            <person name="Madpu R."/>
            <person name="Daugherty S.C."/>
            <person name="Durkin A.S."/>
            <person name="Haft D.H."/>
            <person name="Nelson W.C."/>
            <person name="Peterson J.D."/>
            <person name="Pop M."/>
            <person name="Khouri H.M."/>
            <person name="Radune D."/>
            <person name="Benton J.L."/>
            <person name="Mahamoud Y."/>
            <person name="Jiang L."/>
            <person name="Hance I.R."/>
            <person name="Weidman J.F."/>
            <person name="Berry K.J."/>
            <person name="Plaut R.D."/>
            <person name="Wolf A.M."/>
            <person name="Watkins K.L."/>
            <person name="Nierman W.C."/>
            <person name="Hazen A."/>
            <person name="Cline R.T."/>
            <person name="Redmond C."/>
            <person name="Thwaite J.E."/>
            <person name="White O."/>
            <person name="Salzberg S.L."/>
            <person name="Thomason B."/>
            <person name="Friedlander A.M."/>
            <person name="Koehler T.M."/>
            <person name="Hanna P.C."/>
            <person name="Kolstoe A.-B."/>
            <person name="Fraser C.M."/>
        </authorList>
    </citation>
    <scope>NUCLEOTIDE SEQUENCE [LARGE SCALE GENOMIC DNA]</scope>
    <source>
        <strain>Ames / isolate Porton</strain>
    </source>
</reference>
<reference key="2">
    <citation type="journal article" date="2009" name="J. Bacteriol.">
        <title>The complete genome sequence of Bacillus anthracis Ames 'Ancestor'.</title>
        <authorList>
            <person name="Ravel J."/>
            <person name="Jiang L."/>
            <person name="Stanley S.T."/>
            <person name="Wilson M.R."/>
            <person name="Decker R.S."/>
            <person name="Read T.D."/>
            <person name="Worsham P."/>
            <person name="Keim P.S."/>
            <person name="Salzberg S.L."/>
            <person name="Fraser-Liggett C.M."/>
            <person name="Rasko D.A."/>
        </authorList>
    </citation>
    <scope>NUCLEOTIDE SEQUENCE [LARGE SCALE GENOMIC DNA]</scope>
    <source>
        <strain>Ames ancestor</strain>
    </source>
</reference>
<reference key="3">
    <citation type="submission" date="2004-01" db="EMBL/GenBank/DDBJ databases">
        <title>Complete genome sequence of Bacillus anthracis Sterne.</title>
        <authorList>
            <person name="Brettin T.S."/>
            <person name="Bruce D."/>
            <person name="Challacombe J.F."/>
            <person name="Gilna P."/>
            <person name="Han C."/>
            <person name="Hill K."/>
            <person name="Hitchcock P."/>
            <person name="Jackson P."/>
            <person name="Keim P."/>
            <person name="Longmire J."/>
            <person name="Lucas S."/>
            <person name="Okinaka R."/>
            <person name="Richardson P."/>
            <person name="Rubin E."/>
            <person name="Tice H."/>
        </authorList>
    </citation>
    <scope>NUCLEOTIDE SEQUENCE [LARGE SCALE GENOMIC DNA]</scope>
    <source>
        <strain>Sterne</strain>
    </source>
</reference>
<sequence>MQAKAVARTVRIAPRKVRLVVDLIRGKQVGEAIAILNHTPKTASPVVEKVLKSAIANAEHNYEMDINSLVVEKVFVDEGPTLKRFRPRAMGRASQINKRTSHITVVVSEKKEG</sequence>
<keyword id="KW-1185">Reference proteome</keyword>
<keyword id="KW-0687">Ribonucleoprotein</keyword>
<keyword id="KW-0689">Ribosomal protein</keyword>
<keyword id="KW-0694">RNA-binding</keyword>
<keyword id="KW-0699">rRNA-binding</keyword>
<accession>Q81VS5</accession>
<accession>Q6I4S9</accession>
<accession>Q6KYH5</accession>